<proteinExistence type="inferred from homology"/>
<dbReference type="EC" id="6.3.4.2" evidence="1"/>
<dbReference type="EMBL" id="CP000089">
    <property type="protein sequence ID" value="AAZ47102.1"/>
    <property type="molecule type" value="Genomic_DNA"/>
</dbReference>
<dbReference type="SMR" id="Q47DH9"/>
<dbReference type="STRING" id="159087.Daro_2366"/>
<dbReference type="MEROPS" id="C26.964"/>
<dbReference type="KEGG" id="dar:Daro_2366"/>
<dbReference type="eggNOG" id="COG0504">
    <property type="taxonomic scope" value="Bacteria"/>
</dbReference>
<dbReference type="HOGENOM" id="CLU_011675_5_0_4"/>
<dbReference type="OrthoDB" id="9801107at2"/>
<dbReference type="UniPathway" id="UPA00159">
    <property type="reaction ID" value="UER00277"/>
</dbReference>
<dbReference type="GO" id="GO:0005829">
    <property type="term" value="C:cytosol"/>
    <property type="evidence" value="ECO:0007669"/>
    <property type="project" value="TreeGrafter"/>
</dbReference>
<dbReference type="GO" id="GO:0005524">
    <property type="term" value="F:ATP binding"/>
    <property type="evidence" value="ECO:0007669"/>
    <property type="project" value="UniProtKB-KW"/>
</dbReference>
<dbReference type="GO" id="GO:0003883">
    <property type="term" value="F:CTP synthase activity"/>
    <property type="evidence" value="ECO:0007669"/>
    <property type="project" value="UniProtKB-UniRule"/>
</dbReference>
<dbReference type="GO" id="GO:0004359">
    <property type="term" value="F:glutaminase activity"/>
    <property type="evidence" value="ECO:0007669"/>
    <property type="project" value="RHEA"/>
</dbReference>
<dbReference type="GO" id="GO:0042802">
    <property type="term" value="F:identical protein binding"/>
    <property type="evidence" value="ECO:0007669"/>
    <property type="project" value="TreeGrafter"/>
</dbReference>
<dbReference type="GO" id="GO:0046872">
    <property type="term" value="F:metal ion binding"/>
    <property type="evidence" value="ECO:0007669"/>
    <property type="project" value="UniProtKB-KW"/>
</dbReference>
<dbReference type="GO" id="GO:0044210">
    <property type="term" value="P:'de novo' CTP biosynthetic process"/>
    <property type="evidence" value="ECO:0007669"/>
    <property type="project" value="UniProtKB-UniRule"/>
</dbReference>
<dbReference type="GO" id="GO:0019856">
    <property type="term" value="P:pyrimidine nucleobase biosynthetic process"/>
    <property type="evidence" value="ECO:0007669"/>
    <property type="project" value="TreeGrafter"/>
</dbReference>
<dbReference type="CDD" id="cd03113">
    <property type="entry name" value="CTPS_N"/>
    <property type="match status" value="1"/>
</dbReference>
<dbReference type="CDD" id="cd01746">
    <property type="entry name" value="GATase1_CTP_Synthase"/>
    <property type="match status" value="1"/>
</dbReference>
<dbReference type="FunFam" id="3.40.50.300:FF:000009">
    <property type="entry name" value="CTP synthase"/>
    <property type="match status" value="1"/>
</dbReference>
<dbReference type="FunFam" id="3.40.50.880:FF:000002">
    <property type="entry name" value="CTP synthase"/>
    <property type="match status" value="1"/>
</dbReference>
<dbReference type="Gene3D" id="3.40.50.880">
    <property type="match status" value="1"/>
</dbReference>
<dbReference type="Gene3D" id="3.40.50.300">
    <property type="entry name" value="P-loop containing nucleotide triphosphate hydrolases"/>
    <property type="match status" value="1"/>
</dbReference>
<dbReference type="HAMAP" id="MF_01227">
    <property type="entry name" value="PyrG"/>
    <property type="match status" value="1"/>
</dbReference>
<dbReference type="InterPro" id="IPR029062">
    <property type="entry name" value="Class_I_gatase-like"/>
</dbReference>
<dbReference type="InterPro" id="IPR004468">
    <property type="entry name" value="CTP_synthase"/>
</dbReference>
<dbReference type="InterPro" id="IPR017456">
    <property type="entry name" value="CTP_synthase_N"/>
</dbReference>
<dbReference type="InterPro" id="IPR017926">
    <property type="entry name" value="GATASE"/>
</dbReference>
<dbReference type="InterPro" id="IPR033828">
    <property type="entry name" value="GATase1_CTP_Synthase"/>
</dbReference>
<dbReference type="InterPro" id="IPR027417">
    <property type="entry name" value="P-loop_NTPase"/>
</dbReference>
<dbReference type="NCBIfam" id="NF003792">
    <property type="entry name" value="PRK05380.1"/>
    <property type="match status" value="1"/>
</dbReference>
<dbReference type="NCBIfam" id="TIGR00337">
    <property type="entry name" value="PyrG"/>
    <property type="match status" value="1"/>
</dbReference>
<dbReference type="PANTHER" id="PTHR11550">
    <property type="entry name" value="CTP SYNTHASE"/>
    <property type="match status" value="1"/>
</dbReference>
<dbReference type="PANTHER" id="PTHR11550:SF0">
    <property type="entry name" value="CTP SYNTHASE-RELATED"/>
    <property type="match status" value="1"/>
</dbReference>
<dbReference type="Pfam" id="PF06418">
    <property type="entry name" value="CTP_synth_N"/>
    <property type="match status" value="1"/>
</dbReference>
<dbReference type="Pfam" id="PF00117">
    <property type="entry name" value="GATase"/>
    <property type="match status" value="1"/>
</dbReference>
<dbReference type="SUPFAM" id="SSF52317">
    <property type="entry name" value="Class I glutamine amidotransferase-like"/>
    <property type="match status" value="1"/>
</dbReference>
<dbReference type="SUPFAM" id="SSF52540">
    <property type="entry name" value="P-loop containing nucleoside triphosphate hydrolases"/>
    <property type="match status" value="1"/>
</dbReference>
<dbReference type="PROSITE" id="PS51273">
    <property type="entry name" value="GATASE_TYPE_1"/>
    <property type="match status" value="1"/>
</dbReference>
<evidence type="ECO:0000255" key="1">
    <source>
        <dbReference type="HAMAP-Rule" id="MF_01227"/>
    </source>
</evidence>
<feature type="chain" id="PRO_0000266103" description="CTP synthase">
    <location>
        <begin position="1"/>
        <end position="546"/>
    </location>
</feature>
<feature type="domain" description="Glutamine amidotransferase type-1" evidence="1">
    <location>
        <begin position="290"/>
        <end position="543"/>
    </location>
</feature>
<feature type="region of interest" description="Amidoligase domain" evidence="1">
    <location>
        <begin position="1"/>
        <end position="265"/>
    </location>
</feature>
<feature type="active site" description="Nucleophile; for glutamine hydrolysis" evidence="1">
    <location>
        <position position="378"/>
    </location>
</feature>
<feature type="active site" evidence="1">
    <location>
        <position position="516"/>
    </location>
</feature>
<feature type="active site" evidence="1">
    <location>
        <position position="518"/>
    </location>
</feature>
<feature type="binding site" evidence="1">
    <location>
        <position position="13"/>
    </location>
    <ligand>
        <name>CTP</name>
        <dbReference type="ChEBI" id="CHEBI:37563"/>
        <note>allosteric inhibitor</note>
    </ligand>
</feature>
<feature type="binding site" evidence="1">
    <location>
        <position position="13"/>
    </location>
    <ligand>
        <name>UTP</name>
        <dbReference type="ChEBI" id="CHEBI:46398"/>
    </ligand>
</feature>
<feature type="binding site" evidence="1">
    <location>
        <begin position="14"/>
        <end position="19"/>
    </location>
    <ligand>
        <name>ATP</name>
        <dbReference type="ChEBI" id="CHEBI:30616"/>
    </ligand>
</feature>
<feature type="binding site" evidence="1">
    <location>
        <position position="71"/>
    </location>
    <ligand>
        <name>ATP</name>
        <dbReference type="ChEBI" id="CHEBI:30616"/>
    </ligand>
</feature>
<feature type="binding site" evidence="1">
    <location>
        <position position="71"/>
    </location>
    <ligand>
        <name>Mg(2+)</name>
        <dbReference type="ChEBI" id="CHEBI:18420"/>
    </ligand>
</feature>
<feature type="binding site" evidence="1">
    <location>
        <position position="139"/>
    </location>
    <ligand>
        <name>Mg(2+)</name>
        <dbReference type="ChEBI" id="CHEBI:18420"/>
    </ligand>
</feature>
<feature type="binding site" evidence="1">
    <location>
        <begin position="146"/>
        <end position="148"/>
    </location>
    <ligand>
        <name>CTP</name>
        <dbReference type="ChEBI" id="CHEBI:37563"/>
        <note>allosteric inhibitor</note>
    </ligand>
</feature>
<feature type="binding site" evidence="1">
    <location>
        <begin position="186"/>
        <end position="191"/>
    </location>
    <ligand>
        <name>CTP</name>
        <dbReference type="ChEBI" id="CHEBI:37563"/>
        <note>allosteric inhibitor</note>
    </ligand>
</feature>
<feature type="binding site" evidence="1">
    <location>
        <begin position="186"/>
        <end position="191"/>
    </location>
    <ligand>
        <name>UTP</name>
        <dbReference type="ChEBI" id="CHEBI:46398"/>
    </ligand>
</feature>
<feature type="binding site" evidence="1">
    <location>
        <position position="222"/>
    </location>
    <ligand>
        <name>CTP</name>
        <dbReference type="ChEBI" id="CHEBI:37563"/>
        <note>allosteric inhibitor</note>
    </ligand>
</feature>
<feature type="binding site" evidence="1">
    <location>
        <position position="222"/>
    </location>
    <ligand>
        <name>UTP</name>
        <dbReference type="ChEBI" id="CHEBI:46398"/>
    </ligand>
</feature>
<feature type="binding site" evidence="1">
    <location>
        <position position="351"/>
    </location>
    <ligand>
        <name>L-glutamine</name>
        <dbReference type="ChEBI" id="CHEBI:58359"/>
    </ligand>
</feature>
<feature type="binding site" evidence="1">
    <location>
        <begin position="379"/>
        <end position="382"/>
    </location>
    <ligand>
        <name>L-glutamine</name>
        <dbReference type="ChEBI" id="CHEBI:58359"/>
    </ligand>
</feature>
<feature type="binding site" evidence="1">
    <location>
        <position position="402"/>
    </location>
    <ligand>
        <name>L-glutamine</name>
        <dbReference type="ChEBI" id="CHEBI:58359"/>
    </ligand>
</feature>
<feature type="binding site" evidence="1">
    <location>
        <position position="469"/>
    </location>
    <ligand>
        <name>L-glutamine</name>
        <dbReference type="ChEBI" id="CHEBI:58359"/>
    </ligand>
</feature>
<protein>
    <recommendedName>
        <fullName evidence="1">CTP synthase</fullName>
        <ecNumber evidence="1">6.3.4.2</ecNumber>
    </recommendedName>
    <alternativeName>
        <fullName evidence="1">Cytidine 5'-triphosphate synthase</fullName>
    </alternativeName>
    <alternativeName>
        <fullName evidence="1">Cytidine triphosphate synthetase</fullName>
        <shortName evidence="1">CTP synthetase</shortName>
        <shortName evidence="1">CTPS</shortName>
    </alternativeName>
    <alternativeName>
        <fullName evidence="1">UTP--ammonia ligase</fullName>
    </alternativeName>
</protein>
<keyword id="KW-0067">ATP-binding</keyword>
<keyword id="KW-0315">Glutamine amidotransferase</keyword>
<keyword id="KW-0436">Ligase</keyword>
<keyword id="KW-0460">Magnesium</keyword>
<keyword id="KW-0479">Metal-binding</keyword>
<keyword id="KW-0547">Nucleotide-binding</keyword>
<keyword id="KW-0665">Pyrimidine biosynthesis</keyword>
<sequence>MTKYVFVTGGVVSSLGKGIAAASLGAILESRGIKVTHLKLDPYINVDPGTMSPFQHGEVFVTDDGAETDLDLGHYERFTSAKMAKRNNFTTGQIYDSVLKKERRGEYLGKTVQVIPHITDEIKDRIKAGAEGADVAIVEVGGTVGDIESLPFLEAIRQMGIMEGRNNVCFMHLTLLPYIPTAGELKTKPTQHSVKELREIGIQPDILLCRADRSIPVEERRKIALFCNVMPEAVIECLDADSIYKIPGMLHEQMLDEIVCHKLNILAKAADLTVWENLIVALEHPLHQVKIAFVGKYVDLTESYKSLIEAIKHAGIHTRSQVNIIYLDSEDIEKNGTGVLEDLDAILVPGGFGRRGTEGKIAAIRYARENKVPYLGICLGMQLAVVEFARDVAGMPGAHSTEFVQDTPYPVIGLITEWLDASGKIEKRTEDSDIGGTMRLGAQVCKLGEGTLARSIYGAPEITERHRHRYEVNNTLLAKLEEKGLIVAGRAPGTDLCEMVELPADVHPWFVGCQFHPEFTSNPRQGHPLFSSYVKAALANQKAKGK</sequence>
<gene>
    <name evidence="1" type="primary">pyrG</name>
    <name type="ordered locus">Daro_2366</name>
</gene>
<comment type="function">
    <text evidence="1">Catalyzes the ATP-dependent amination of UTP to CTP with either L-glutamine or ammonia as the source of nitrogen. Regulates intracellular CTP levels through interactions with the four ribonucleotide triphosphates.</text>
</comment>
<comment type="catalytic activity">
    <reaction evidence="1">
        <text>UTP + L-glutamine + ATP + H2O = CTP + L-glutamate + ADP + phosphate + 2 H(+)</text>
        <dbReference type="Rhea" id="RHEA:26426"/>
        <dbReference type="ChEBI" id="CHEBI:15377"/>
        <dbReference type="ChEBI" id="CHEBI:15378"/>
        <dbReference type="ChEBI" id="CHEBI:29985"/>
        <dbReference type="ChEBI" id="CHEBI:30616"/>
        <dbReference type="ChEBI" id="CHEBI:37563"/>
        <dbReference type="ChEBI" id="CHEBI:43474"/>
        <dbReference type="ChEBI" id="CHEBI:46398"/>
        <dbReference type="ChEBI" id="CHEBI:58359"/>
        <dbReference type="ChEBI" id="CHEBI:456216"/>
        <dbReference type="EC" id="6.3.4.2"/>
    </reaction>
</comment>
<comment type="catalytic activity">
    <reaction evidence="1">
        <text>L-glutamine + H2O = L-glutamate + NH4(+)</text>
        <dbReference type="Rhea" id="RHEA:15889"/>
        <dbReference type="ChEBI" id="CHEBI:15377"/>
        <dbReference type="ChEBI" id="CHEBI:28938"/>
        <dbReference type="ChEBI" id="CHEBI:29985"/>
        <dbReference type="ChEBI" id="CHEBI:58359"/>
    </reaction>
</comment>
<comment type="catalytic activity">
    <reaction evidence="1">
        <text>UTP + NH4(+) + ATP = CTP + ADP + phosphate + 2 H(+)</text>
        <dbReference type="Rhea" id="RHEA:16597"/>
        <dbReference type="ChEBI" id="CHEBI:15378"/>
        <dbReference type="ChEBI" id="CHEBI:28938"/>
        <dbReference type="ChEBI" id="CHEBI:30616"/>
        <dbReference type="ChEBI" id="CHEBI:37563"/>
        <dbReference type="ChEBI" id="CHEBI:43474"/>
        <dbReference type="ChEBI" id="CHEBI:46398"/>
        <dbReference type="ChEBI" id="CHEBI:456216"/>
    </reaction>
</comment>
<comment type="activity regulation">
    <text evidence="1">Allosterically activated by GTP, when glutamine is the substrate; GTP has no effect on the reaction when ammonia is the substrate. The allosteric effector GTP functions by stabilizing the protein conformation that binds the tetrahedral intermediate(s) formed during glutamine hydrolysis. Inhibited by the product CTP, via allosteric rather than competitive inhibition.</text>
</comment>
<comment type="pathway">
    <text evidence="1">Pyrimidine metabolism; CTP biosynthesis via de novo pathway; CTP from UDP: step 2/2.</text>
</comment>
<comment type="subunit">
    <text evidence="1">Homotetramer.</text>
</comment>
<comment type="miscellaneous">
    <text evidence="1">CTPSs have evolved a hybrid strategy for distinguishing between UTP and CTP. The overlapping regions of the product feedback inhibitory and substrate sites recognize a common feature in both compounds, the triphosphate moiety. To differentiate isosteric substrate and product pyrimidine rings, an additional pocket far from the expected kinase/ligase catalytic site, specifically recognizes the cytosine and ribose portions of the product inhibitor.</text>
</comment>
<comment type="similarity">
    <text evidence="1">Belongs to the CTP synthase family.</text>
</comment>
<name>PYRG_DECAR</name>
<organism>
    <name type="scientific">Dechloromonas aromatica (strain RCB)</name>
    <dbReference type="NCBI Taxonomy" id="159087"/>
    <lineage>
        <taxon>Bacteria</taxon>
        <taxon>Pseudomonadati</taxon>
        <taxon>Pseudomonadota</taxon>
        <taxon>Betaproteobacteria</taxon>
        <taxon>Rhodocyclales</taxon>
        <taxon>Azonexaceae</taxon>
        <taxon>Dechloromonas</taxon>
    </lineage>
</organism>
<accession>Q47DH9</accession>
<reference key="1">
    <citation type="journal article" date="2009" name="BMC Genomics">
        <title>Metabolic analysis of the soil microbe Dechloromonas aromatica str. RCB: indications of a surprisingly complex life-style and cryptic anaerobic pathways for aromatic degradation.</title>
        <authorList>
            <person name="Salinero K.K."/>
            <person name="Keller K."/>
            <person name="Feil W.S."/>
            <person name="Feil H."/>
            <person name="Trong S."/>
            <person name="Di Bartolo G."/>
            <person name="Lapidus A."/>
        </authorList>
    </citation>
    <scope>NUCLEOTIDE SEQUENCE [LARGE SCALE GENOMIC DNA]</scope>
    <source>
        <strain>RCB</strain>
    </source>
</reference>